<evidence type="ECO:0000250" key="1">
    <source>
        <dbReference type="UniProtKB" id="P0ADZ7"/>
    </source>
</evidence>
<evidence type="ECO:0000255" key="2"/>
<evidence type="ECO:0000305" key="3"/>
<organism>
    <name type="scientific">Brucella abortus biovar 1 (strain 9-941)</name>
    <dbReference type="NCBI Taxonomy" id="262698"/>
    <lineage>
        <taxon>Bacteria</taxon>
        <taxon>Pseudomonadati</taxon>
        <taxon>Pseudomonadota</taxon>
        <taxon>Alphaproteobacteria</taxon>
        <taxon>Hyphomicrobiales</taxon>
        <taxon>Brucellaceae</taxon>
        <taxon>Brucella/Ochrobactrum group</taxon>
        <taxon>Brucella</taxon>
    </lineage>
</organism>
<protein>
    <recommendedName>
        <fullName>Sec translocon accessory complex subunit YajC</fullName>
    </recommendedName>
    <alternativeName>
        <fullName>Immunogenic membrane protein YajC</fullName>
    </alternativeName>
</protein>
<accession>P0C120</accession>
<accession>P0A4Q3</accession>
<accession>Q57DL7</accession>
<accession>Q9ZG87</accession>
<feature type="chain" id="PRO_0000097022" description="Sec translocon accessory complex subunit YajC">
    <location>
        <begin position="1"/>
        <end position="113"/>
    </location>
</feature>
<feature type="transmembrane region" description="Helical" evidence="2">
    <location>
        <begin position="18"/>
        <end position="38"/>
    </location>
</feature>
<gene>
    <name type="primary">yajC</name>
    <name type="ordered locus">BruAb1_0902</name>
</gene>
<keyword id="KW-0997">Cell inner membrane</keyword>
<keyword id="KW-1003">Cell membrane</keyword>
<keyword id="KW-0472">Membrane</keyword>
<keyword id="KW-0653">Protein transport</keyword>
<keyword id="KW-0811">Translocation</keyword>
<keyword id="KW-0812">Transmembrane</keyword>
<keyword id="KW-1133">Transmembrane helix</keyword>
<keyword id="KW-0813">Transport</keyword>
<reference key="1">
    <citation type="journal article" date="2005" name="J. Bacteriol.">
        <title>Completion of the genome sequence of Brucella abortus and comparison to the highly similar genomes of Brucella melitensis and Brucella suis.</title>
        <authorList>
            <person name="Halling S.M."/>
            <person name="Peterson-Burch B.D."/>
            <person name="Bricker B.J."/>
            <person name="Zuerner R.L."/>
            <person name="Qing Z."/>
            <person name="Li L.-L."/>
            <person name="Kapur V."/>
            <person name="Alt D.P."/>
            <person name="Olsen S.C."/>
        </authorList>
    </citation>
    <scope>NUCLEOTIDE SEQUENCE [LARGE SCALE GENOMIC DNA]</scope>
    <source>
        <strain>9-941</strain>
    </source>
</reference>
<name>YAJC_BRUAB</name>
<dbReference type="EMBL" id="AE017223">
    <property type="protein sequence ID" value="AAX74267.1"/>
    <property type="molecule type" value="Genomic_DNA"/>
</dbReference>
<dbReference type="RefSeq" id="WP_002964021.1">
    <property type="nucleotide sequence ID" value="NC_006932.1"/>
</dbReference>
<dbReference type="SMR" id="P0C120"/>
<dbReference type="EnsemblBacteria" id="AAX74267">
    <property type="protein sequence ID" value="AAX74267"/>
    <property type="gene ID" value="BruAb1_0902"/>
</dbReference>
<dbReference type="GeneID" id="93016732"/>
<dbReference type="KEGG" id="bmb:BruAb1_0902"/>
<dbReference type="HOGENOM" id="CLU_116157_2_0_5"/>
<dbReference type="Proteomes" id="UP000000540">
    <property type="component" value="Chromosome I"/>
</dbReference>
<dbReference type="GO" id="GO:0005886">
    <property type="term" value="C:plasma membrane"/>
    <property type="evidence" value="ECO:0007669"/>
    <property type="project" value="UniProtKB-SubCell"/>
</dbReference>
<dbReference type="GO" id="GO:0015031">
    <property type="term" value="P:protein transport"/>
    <property type="evidence" value="ECO:0007669"/>
    <property type="project" value="UniProtKB-KW"/>
</dbReference>
<dbReference type="InterPro" id="IPR003849">
    <property type="entry name" value="Preprotein_translocase_YajC"/>
</dbReference>
<dbReference type="NCBIfam" id="TIGR00739">
    <property type="entry name" value="yajC"/>
    <property type="match status" value="1"/>
</dbReference>
<dbReference type="PANTHER" id="PTHR33909">
    <property type="entry name" value="SEC TRANSLOCON ACCESSORY COMPLEX SUBUNIT YAJC"/>
    <property type="match status" value="1"/>
</dbReference>
<dbReference type="PANTHER" id="PTHR33909:SF1">
    <property type="entry name" value="SEC TRANSLOCON ACCESSORY COMPLEX SUBUNIT YAJC"/>
    <property type="match status" value="1"/>
</dbReference>
<dbReference type="Pfam" id="PF02699">
    <property type="entry name" value="YajC"/>
    <property type="match status" value="1"/>
</dbReference>
<dbReference type="PRINTS" id="PR01853">
    <property type="entry name" value="YAJCTRNLCASE"/>
</dbReference>
<dbReference type="SMART" id="SM01323">
    <property type="entry name" value="YajC"/>
    <property type="match status" value="1"/>
</dbReference>
<sequence>MFVTPAFAQASGSVVGPDMLMSILPFILIFVIMYFLIIRPQRTQMKKRQEMLNSVRRGDTVVTGGGIVGKVLKVVDDNELELEIADGVRIRVVRATLMDVRVKGEPVADNKNK</sequence>
<comment type="function">
    <text evidence="1">The SecYEG-SecDF-YajC-YidC holo-translocon (HTL) protein secretase/insertase is a supercomplex required for protein secretion, insertion of proteins into membranes, and assembly of membrane protein complexes. While the SecYEG complex is essential for assembly of a number of proteins and complexes, the SecDF-YajC-YidC subcomplex facilitates these functions.</text>
</comment>
<comment type="subunit">
    <text evidence="1">Part of the SecDF-YidC-YajC translocase complex. The SecDF-YidC-YajC translocase forms a supercomplex with SecYEG, called the holo-translocon (HTL).</text>
</comment>
<comment type="subcellular location">
    <subcellularLocation>
        <location evidence="1">Cell inner membrane</location>
        <topology evidence="1">Single-pass membrane protein</topology>
    </subcellularLocation>
</comment>
<comment type="similarity">
    <text evidence="3">Belongs to the YajC family.</text>
</comment>
<proteinExistence type="inferred from homology"/>